<feature type="chain" id="PRO_0000437426" description="PHD finger protein EHD3">
    <location>
        <begin position="1"/>
        <end position="563"/>
    </location>
</feature>
<feature type="zinc finger region" description="PHD-type 1" evidence="1">
    <location>
        <begin position="296"/>
        <end position="348"/>
    </location>
</feature>
<feature type="zinc finger region" description="PHD-type 2" evidence="1">
    <location>
        <begin position="420"/>
        <end position="472"/>
    </location>
</feature>
<feature type="zinc finger region" description="PHD-type 3" evidence="1">
    <location>
        <begin position="474"/>
        <end position="524"/>
    </location>
</feature>
<feature type="region of interest" description="Disordered" evidence="2">
    <location>
        <begin position="1"/>
        <end position="46"/>
    </location>
</feature>
<gene>
    <name evidence="5" type="primary">EHD3</name>
    <name evidence="8" type="ordered locus">Os08g0105000</name>
    <name evidence="6" type="ordered locus">LOC_Os08g01420</name>
    <name evidence="7" type="ORF">OJ1300_E01.8-1</name>
</gene>
<sequence>MGSQNRPPPPRKRQPPPPEDHLVTYKRRRSKETQPLPLMANGANSKKDAKAQHWISWRDTLHGFLQSPAISQGGGIQTCIRHALQHNPCLLTNGVVVHTEFKGNPAHSQGEEAKVQHPNGAAGGKVVSADAAIQDAAAAASSEANKAMCNNALFDILVSQKFALLCHLLLGTFHVNKPGDVIDLEKIDAKMRNGDYAHNPALFDDDIQQMWEKFEQVGQEMTGLASNLSTISRVSYQKQASGFSEAEVAEHRIEEISLPGAVHVVTKESTTTVQLAPCDSSHSTIPKRTVPPGRDLCPCDGCGTKVDVEEGLICDECDTMYHFACVKLLNPDIKQVPAIWHCSTCSFKKKELAADTTNNVAHDCLHGGNCVLCDQLELVKTEEEDPKLPIKIELAEEREGSSVSSMGEDNEPDLSTTALSNLCKHCGTCEDDDKRFMVCGHPYCVYKFYHIRCLKTSQLAIEQQKKLGCWYCPSCLCRGCFQDKDDDQIVMCDGCDEGYHIYCMRPARNTIPKGKWYCTFCKIRRAAEGMHKYEDSVLKIHGNSKHACNVNQSKDSEGDGTEK</sequence>
<comment type="function">
    <text evidence="3">Probable transcription factor involved in the regulation of floral induction under long day (LD) conditions. Promotes photoperiodic flowering by repressing GHD7, a major floral repressor. Seems to function independently of HD1.</text>
</comment>
<comment type="subunit">
    <text evidence="4">Interacts with TRX1.</text>
</comment>
<comment type="subcellular location">
    <subcellularLocation>
        <location evidence="3 4">Nucleus</location>
    </subcellularLocation>
</comment>
<comment type="tissue specificity">
    <text evidence="3">Expressed in shoot apical meristem and leaves.</text>
</comment>
<comment type="induction">
    <text evidence="3">Circadian-regulation under short day (SD) conditions. Expression increases after dawn, peaks just before dusk and gradually decreases during the dark period.</text>
</comment>
<comment type="disruption phenotype">
    <text evidence="3">Late-flowering phenotype under short day (SD) and natural day (ND) conditions. Extreme late-flowering phenotype under long day (LD) conditions.</text>
</comment>
<accession>Q6ZJM9</accession>
<proteinExistence type="evidence at protein level"/>
<reference key="1">
    <citation type="journal article" date="2011" name="Plant J.">
        <title>Ehd3, encoding a plant homeodomain finger-containing protein, is a critical promoter of rice flowering.</title>
        <authorList>
            <person name="Matsubara K."/>
            <person name="Yamanouchi U."/>
            <person name="Nonoue Y."/>
            <person name="Sugimoto K."/>
            <person name="Wang Z.-X."/>
            <person name="Minobe Y."/>
            <person name="Yano M."/>
        </authorList>
    </citation>
    <scope>NUCLEOTIDE SEQUENCE [GENOMIC DNA / MRNA]</scope>
    <scope>FUNCTION</scope>
    <scope>SUBCELLULAR LOCATION</scope>
    <scope>TISSUE SPECIFICITY</scope>
    <scope>INDUCTION</scope>
    <scope>DISRUPTION PHENOTYPE</scope>
    <source>
        <strain>cv. Tohoku IL9</strain>
    </source>
</reference>
<reference key="2">
    <citation type="journal article" date="2005" name="Nature">
        <title>The map-based sequence of the rice genome.</title>
        <authorList>
            <consortium name="International rice genome sequencing project (IRGSP)"/>
        </authorList>
    </citation>
    <scope>NUCLEOTIDE SEQUENCE [LARGE SCALE GENOMIC DNA]</scope>
    <source>
        <strain>cv. Nipponbare</strain>
    </source>
</reference>
<reference key="3">
    <citation type="journal article" date="2008" name="Nucleic Acids Res.">
        <title>The rice annotation project database (RAP-DB): 2008 update.</title>
        <authorList>
            <consortium name="The rice annotation project (RAP)"/>
        </authorList>
    </citation>
    <scope>GENOME REANNOTATION</scope>
    <source>
        <strain>cv. Nipponbare</strain>
    </source>
</reference>
<reference key="4">
    <citation type="journal article" date="2013" name="Rice">
        <title>Improvement of the Oryza sativa Nipponbare reference genome using next generation sequence and optical map data.</title>
        <authorList>
            <person name="Kawahara Y."/>
            <person name="de la Bastide M."/>
            <person name="Hamilton J.P."/>
            <person name="Kanamori H."/>
            <person name="McCombie W.R."/>
            <person name="Ouyang S."/>
            <person name="Schwartz D.C."/>
            <person name="Tanaka T."/>
            <person name="Wu J."/>
            <person name="Zhou S."/>
            <person name="Childs K.L."/>
            <person name="Davidson R.M."/>
            <person name="Lin H."/>
            <person name="Quesada-Ocampo L."/>
            <person name="Vaillancourt B."/>
            <person name="Sakai H."/>
            <person name="Lee S.S."/>
            <person name="Kim J."/>
            <person name="Numa H."/>
            <person name="Itoh T."/>
            <person name="Buell C.R."/>
            <person name="Matsumoto T."/>
        </authorList>
    </citation>
    <scope>GENOME REANNOTATION</scope>
    <source>
        <strain>cv. Nipponbare</strain>
    </source>
</reference>
<reference key="5">
    <citation type="journal article" date="2003" name="Science">
        <title>Collection, mapping, and annotation of over 28,000 cDNA clones from japonica rice.</title>
        <authorList>
            <consortium name="The rice full-length cDNA consortium"/>
        </authorList>
    </citation>
    <scope>NUCLEOTIDE SEQUENCE [LARGE SCALE MRNA]</scope>
    <source>
        <strain>cv. Nipponbare</strain>
    </source>
</reference>
<reference key="6">
    <citation type="journal article" date="2014" name="Plant Physiol.">
        <title>Trithorax group protein Oryza sativa Trithorax1 controls flowering time in rice via interaction with early heading date3.</title>
        <authorList>
            <person name="Choi S.C."/>
            <person name="Lee S."/>
            <person name="Kim S.R."/>
            <person name="Lee Y.S."/>
            <person name="Liu C."/>
            <person name="Cao X."/>
            <person name="An G."/>
        </authorList>
    </citation>
    <scope>INTERACTION WITH TRX1</scope>
    <scope>SUBCELLULAR LOCATION</scope>
</reference>
<protein>
    <recommendedName>
        <fullName evidence="6">PHD finger protein EHD3</fullName>
    </recommendedName>
    <alternativeName>
        <fullName evidence="5">Proetin EARLY HEADING 3</fullName>
    </alternativeName>
</protein>
<name>EHD3_ORYSJ</name>
<dbReference type="EMBL" id="AB517624">
    <property type="protein sequence ID" value="BAI77460.1"/>
    <property type="molecule type" value="Genomic_DNA"/>
</dbReference>
<dbReference type="EMBL" id="AB517626">
    <property type="protein sequence ID" value="BAI77462.1"/>
    <property type="molecule type" value="mRNA"/>
</dbReference>
<dbReference type="EMBL" id="AP003909">
    <property type="protein sequence ID" value="BAD08931.1"/>
    <property type="molecule type" value="Genomic_DNA"/>
</dbReference>
<dbReference type="EMBL" id="AP008214">
    <property type="protein sequence ID" value="BAF22697.1"/>
    <property type="molecule type" value="Genomic_DNA"/>
</dbReference>
<dbReference type="EMBL" id="AP014964">
    <property type="protein sequence ID" value="BAT03438.1"/>
    <property type="molecule type" value="Genomic_DNA"/>
</dbReference>
<dbReference type="EMBL" id="AK102613">
    <property type="protein sequence ID" value="BAG95636.1"/>
    <property type="molecule type" value="mRNA"/>
</dbReference>
<dbReference type="RefSeq" id="XP_015648278.1">
    <property type="nucleotide sequence ID" value="XM_015792792.1"/>
</dbReference>
<dbReference type="SMR" id="Q6ZJM9"/>
<dbReference type="FunCoup" id="Q6ZJM9">
    <property type="interactions" value="2293"/>
</dbReference>
<dbReference type="STRING" id="39947.Q6ZJM9"/>
<dbReference type="PaxDb" id="39947-Q6ZJM9"/>
<dbReference type="EnsemblPlants" id="Os08t0105000-01">
    <property type="protein sequence ID" value="Os08t0105000-01"/>
    <property type="gene ID" value="Os08g0105000"/>
</dbReference>
<dbReference type="EnsemblPlants" id="Os08t0105000-02">
    <property type="protein sequence ID" value="Os08t0105000-02"/>
    <property type="gene ID" value="Os08g0105000"/>
</dbReference>
<dbReference type="Gramene" id="Os08t0105000-01">
    <property type="protein sequence ID" value="Os08t0105000-01"/>
    <property type="gene ID" value="Os08g0105000"/>
</dbReference>
<dbReference type="Gramene" id="Os08t0105000-02">
    <property type="protein sequence ID" value="Os08t0105000-02"/>
    <property type="gene ID" value="Os08g0105000"/>
</dbReference>
<dbReference type="KEGG" id="dosa:Os08g0105000"/>
<dbReference type="eggNOG" id="ENOG502QQIW">
    <property type="taxonomic scope" value="Eukaryota"/>
</dbReference>
<dbReference type="HOGENOM" id="CLU_017556_1_0_1"/>
<dbReference type="InParanoid" id="Q6ZJM9"/>
<dbReference type="OMA" id="ACEMNDQ"/>
<dbReference type="OrthoDB" id="1903104at2759"/>
<dbReference type="Proteomes" id="UP000000763">
    <property type="component" value="Chromosome 8"/>
</dbReference>
<dbReference type="Proteomes" id="UP000059680">
    <property type="component" value="Chromosome 8"/>
</dbReference>
<dbReference type="ExpressionAtlas" id="Q6ZJM9">
    <property type="expression patterns" value="baseline and differential"/>
</dbReference>
<dbReference type="GO" id="GO:0000785">
    <property type="term" value="C:chromatin"/>
    <property type="evidence" value="ECO:0000318"/>
    <property type="project" value="GO_Central"/>
</dbReference>
<dbReference type="GO" id="GO:0005634">
    <property type="term" value="C:nucleus"/>
    <property type="evidence" value="ECO:0000314"/>
    <property type="project" value="UniProtKB"/>
</dbReference>
<dbReference type="GO" id="GO:0003682">
    <property type="term" value="F:chromatin binding"/>
    <property type="evidence" value="ECO:0000318"/>
    <property type="project" value="GO_Central"/>
</dbReference>
<dbReference type="GO" id="GO:0003677">
    <property type="term" value="F:DNA binding"/>
    <property type="evidence" value="ECO:0007669"/>
    <property type="project" value="UniProtKB-KW"/>
</dbReference>
<dbReference type="GO" id="GO:0004402">
    <property type="term" value="F:histone acetyltransferase activity"/>
    <property type="evidence" value="ECO:0000318"/>
    <property type="project" value="GO_Central"/>
</dbReference>
<dbReference type="GO" id="GO:0003712">
    <property type="term" value="F:transcription coregulator activity"/>
    <property type="evidence" value="ECO:0000318"/>
    <property type="project" value="GO_Central"/>
</dbReference>
<dbReference type="GO" id="GO:0008270">
    <property type="term" value="F:zinc ion binding"/>
    <property type="evidence" value="ECO:0007669"/>
    <property type="project" value="UniProtKB-KW"/>
</dbReference>
<dbReference type="GO" id="GO:0009908">
    <property type="term" value="P:flower development"/>
    <property type="evidence" value="ECO:0007669"/>
    <property type="project" value="UniProtKB-KW"/>
</dbReference>
<dbReference type="GO" id="GO:0048586">
    <property type="term" value="P:regulation of long-day photoperiodism, flowering"/>
    <property type="evidence" value="ECO:0000315"/>
    <property type="project" value="UniProtKB"/>
</dbReference>
<dbReference type="GO" id="GO:0006357">
    <property type="term" value="P:regulation of transcription by RNA polymerase II"/>
    <property type="evidence" value="ECO:0000318"/>
    <property type="project" value="GO_Central"/>
</dbReference>
<dbReference type="FunFam" id="3.30.40.10:FF:000549">
    <property type="entry name" value="RING/FYVE/PHD-type zinc finger family protein"/>
    <property type="match status" value="1"/>
</dbReference>
<dbReference type="Gene3D" id="2.30.30.1150">
    <property type="match status" value="1"/>
</dbReference>
<dbReference type="Gene3D" id="3.30.40.10">
    <property type="entry name" value="Zinc/RING finger domain, C3HC4 (zinc finger)"/>
    <property type="match status" value="1"/>
</dbReference>
<dbReference type="InterPro" id="IPR011011">
    <property type="entry name" value="Znf_FYVE_PHD"/>
</dbReference>
<dbReference type="InterPro" id="IPR001965">
    <property type="entry name" value="Znf_PHD"/>
</dbReference>
<dbReference type="InterPro" id="IPR019787">
    <property type="entry name" value="Znf_PHD-finger"/>
</dbReference>
<dbReference type="InterPro" id="IPR013083">
    <property type="entry name" value="Znf_RING/FYVE/PHD"/>
</dbReference>
<dbReference type="PANTHER" id="PTHR47162">
    <property type="entry name" value="OS02G0192300 PROTEIN"/>
    <property type="match status" value="1"/>
</dbReference>
<dbReference type="PANTHER" id="PTHR47162:SF9">
    <property type="entry name" value="PHD FINGER PROTEIN EHD3-LIKE"/>
    <property type="match status" value="1"/>
</dbReference>
<dbReference type="Pfam" id="PF00628">
    <property type="entry name" value="PHD"/>
    <property type="match status" value="2"/>
</dbReference>
<dbReference type="SMART" id="SM00249">
    <property type="entry name" value="PHD"/>
    <property type="match status" value="3"/>
</dbReference>
<dbReference type="SUPFAM" id="SSF57903">
    <property type="entry name" value="FYVE/PHD zinc finger"/>
    <property type="match status" value="3"/>
</dbReference>
<dbReference type="PROSITE" id="PS01359">
    <property type="entry name" value="ZF_PHD_1"/>
    <property type="match status" value="3"/>
</dbReference>
<dbReference type="PROSITE" id="PS50016">
    <property type="entry name" value="ZF_PHD_2"/>
    <property type="match status" value="2"/>
</dbReference>
<organism>
    <name type="scientific">Oryza sativa subsp. japonica</name>
    <name type="common">Rice</name>
    <dbReference type="NCBI Taxonomy" id="39947"/>
    <lineage>
        <taxon>Eukaryota</taxon>
        <taxon>Viridiplantae</taxon>
        <taxon>Streptophyta</taxon>
        <taxon>Embryophyta</taxon>
        <taxon>Tracheophyta</taxon>
        <taxon>Spermatophyta</taxon>
        <taxon>Magnoliopsida</taxon>
        <taxon>Liliopsida</taxon>
        <taxon>Poales</taxon>
        <taxon>Poaceae</taxon>
        <taxon>BOP clade</taxon>
        <taxon>Oryzoideae</taxon>
        <taxon>Oryzeae</taxon>
        <taxon>Oryzinae</taxon>
        <taxon>Oryza</taxon>
        <taxon>Oryza sativa</taxon>
    </lineage>
</organism>
<keyword id="KW-0238">DNA-binding</keyword>
<keyword id="KW-0287">Flowering</keyword>
<keyword id="KW-0479">Metal-binding</keyword>
<keyword id="KW-0539">Nucleus</keyword>
<keyword id="KW-1185">Reference proteome</keyword>
<keyword id="KW-0677">Repeat</keyword>
<keyword id="KW-0804">Transcription</keyword>
<keyword id="KW-0805">Transcription regulation</keyword>
<keyword id="KW-0862">Zinc</keyword>
<keyword id="KW-0863">Zinc-finger</keyword>
<evidence type="ECO:0000255" key="1">
    <source>
        <dbReference type="PROSITE-ProRule" id="PRU00146"/>
    </source>
</evidence>
<evidence type="ECO:0000256" key="2">
    <source>
        <dbReference type="SAM" id="MobiDB-lite"/>
    </source>
</evidence>
<evidence type="ECO:0000269" key="3">
    <source>
    </source>
</evidence>
<evidence type="ECO:0000269" key="4">
    <source>
    </source>
</evidence>
<evidence type="ECO:0000303" key="5">
    <source>
    </source>
</evidence>
<evidence type="ECO:0000305" key="6"/>
<evidence type="ECO:0000312" key="7">
    <source>
        <dbReference type="EMBL" id="BAD08931.1"/>
    </source>
</evidence>
<evidence type="ECO:0000312" key="8">
    <source>
        <dbReference type="EMBL" id="BAF22697.1"/>
    </source>
</evidence>